<protein>
    <recommendedName>
        <fullName>Small hydrophobic protein</fullName>
    </recommendedName>
</protein>
<organismHost>
    <name type="scientific">Homo sapiens</name>
    <name type="common">Human</name>
    <dbReference type="NCBI Taxonomy" id="9606"/>
</organismHost>
<sequence length="179" mass="20628">MITLDVIKSDGSSKTCTHLKKIIKDHSGKVLIALKLILALLTFFTITITINYIKVENNLQICQSKTESDKEDSPSNTTSVTTKTTLDHDITQYFKRLIQRYTDSVINKDTCWKISRNQCTNITTYKFLCFKPEDSKINSCDRLTDLCRNKSKSAAEAYHTVECHCIYTIEWKCYHHSID</sequence>
<proteinExistence type="evidence at protein level"/>
<keyword id="KW-0325">Glycoprotein</keyword>
<keyword id="KW-1032">Host cell membrane</keyword>
<keyword id="KW-1043">Host membrane</keyword>
<keyword id="KW-0375">Hydrogen ion transport</keyword>
<keyword id="KW-0406">Ion transport</keyword>
<keyword id="KW-0472">Membrane</keyword>
<keyword id="KW-0597">Phosphoprotein</keyword>
<keyword id="KW-1185">Reference proteome</keyword>
<keyword id="KW-0735">Signal-anchor</keyword>
<keyword id="KW-0812">Transmembrane</keyword>
<keyword id="KW-1133">Transmembrane helix</keyword>
<keyword id="KW-0813">Transport</keyword>
<keyword id="KW-0946">Virion</keyword>
<reference key="1">
    <citation type="journal article" date="2003" name="Virology">
        <title>Genetic diversity between human metapneumovirus subgroups.</title>
        <authorList>
            <person name="Biacchesi S."/>
            <person name="Skiadopoulos M.H."/>
            <person name="Boivin G."/>
            <person name="Hanson C.T."/>
            <person name="Murphy B.R."/>
            <person name="Collins P.L."/>
            <person name="Buchholz U.J."/>
        </authorList>
    </citation>
    <scope>NUCLEOTIDE SEQUENCE [GENOMIC RNA]</scope>
</reference>
<reference key="2">
    <citation type="journal article" date="2005" name="J. Virol.">
        <title>Chimeric recombinant human metapneumoviruses with the nucleoprotein or phosphoprotein open reading frame replaced by that of avian metapneumovirus exhibit improved growth in vitro and attenuation in vivo.</title>
        <authorList>
            <person name="Pham Q.N."/>
            <person name="Biacchesi S."/>
            <person name="Skiadopoulos M.H."/>
            <person name="Murphy B.R."/>
            <person name="Collins P.L."/>
            <person name="Buchholz U.J."/>
        </authorList>
    </citation>
    <scope>NUCLEOTIDE SEQUENCE [GENOMIC RNA]</scope>
</reference>
<reference key="3">
    <citation type="journal article" date="2014" name="J. Virol.">
        <title>The human metapneumovirus small hydrophobic protein has properties consistent with those of a viroporin and can modulate viral fusogenic activity.</title>
        <authorList>
            <person name="Masante C."/>
            <person name="El Najjar F."/>
            <person name="Chang A."/>
            <person name="Jones A."/>
            <person name="Moncman C.L."/>
            <person name="Dutch R.E."/>
        </authorList>
    </citation>
    <scope>FUNCTION</scope>
    <scope>SUBUNIT</scope>
</reference>
<reference key="4">
    <citation type="journal article" date="2016" name="Virology">
        <title>Human metapneumovirus small hydrophobic (SH) protein downregulates type I IFN pathway signaling by affecting STAT1 expression and phosphorylation.</title>
        <authorList>
            <person name="Hastings A.K."/>
            <person name="Amato K.R."/>
            <person name="Wen S.C."/>
            <person name="Peterson L.S."/>
            <person name="Williams J.V."/>
        </authorList>
    </citation>
    <scope>FUNCTION</scope>
</reference>
<reference key="5">
    <citation type="journal article" date="2018" name="Viruses">
        <title>Human Metapneumovirus Small Hydrophobic Protein Inhibits Interferon Induction in Plasmacytoid Dendritic Cells.</title>
        <authorList>
            <person name="Bao X."/>
            <person name="Kolli D."/>
            <person name="Esham D."/>
            <person name="Velayutham T.S."/>
            <person name="Casola A."/>
        </authorList>
    </citation>
    <scope>FUNCTION</scope>
</reference>
<organism>
    <name type="scientific">Human metapneumovirus (strain CAN97-83)</name>
    <name type="common">HMPV</name>
    <dbReference type="NCBI Taxonomy" id="694067"/>
    <lineage>
        <taxon>Viruses</taxon>
        <taxon>Riboviria</taxon>
        <taxon>Orthornavirae</taxon>
        <taxon>Negarnaviricota</taxon>
        <taxon>Haploviricotina</taxon>
        <taxon>Monjiviricetes</taxon>
        <taxon>Mononegavirales</taxon>
        <taxon>Pneumoviridae</taxon>
        <taxon>Metapneumovirus</taxon>
        <taxon>Metapneumovirus hominis</taxon>
    </lineage>
</organism>
<name>SH_HMPVC</name>
<gene>
    <name type="primary">SH</name>
</gene>
<dbReference type="EMBL" id="AY297749">
    <property type="protein sequence ID" value="AAQ67698.1"/>
    <property type="molecule type" value="Genomic_RNA"/>
</dbReference>
<dbReference type="RefSeq" id="YP_012611.1">
    <property type="nucleotide sequence ID" value="NC_004148.2"/>
</dbReference>
<dbReference type="TCDB" id="1.A.90.1.1">
    <property type="family name" value="the human metapneumovirus (hmpv) viroporin (hmpv-viroporin) family"/>
</dbReference>
<dbReference type="GlyCosmos" id="Q6WB95">
    <property type="glycosylation" value="3 sites, No reported glycans"/>
</dbReference>
<dbReference type="Proteomes" id="UP000001398">
    <property type="component" value="Segment"/>
</dbReference>
<dbReference type="GO" id="GO:0020002">
    <property type="term" value="C:host cell plasma membrane"/>
    <property type="evidence" value="ECO:0007669"/>
    <property type="project" value="UniProtKB-SubCell"/>
</dbReference>
<dbReference type="GO" id="GO:0016020">
    <property type="term" value="C:membrane"/>
    <property type="evidence" value="ECO:0007669"/>
    <property type="project" value="UniProtKB-KW"/>
</dbReference>
<dbReference type="GO" id="GO:0055036">
    <property type="term" value="C:virion membrane"/>
    <property type="evidence" value="ECO:0007669"/>
    <property type="project" value="UniProtKB-SubCell"/>
</dbReference>
<dbReference type="GO" id="GO:1902600">
    <property type="term" value="P:proton transmembrane transport"/>
    <property type="evidence" value="ECO:0007669"/>
    <property type="project" value="UniProtKB-KW"/>
</dbReference>
<accession>Q6WB95</accession>
<feature type="chain" id="PRO_0000394815" description="Small hydrophobic protein">
    <location>
        <begin position="1"/>
        <end position="179"/>
    </location>
</feature>
<feature type="topological domain" description="Intravirion" evidence="2">
    <location>
        <begin position="1"/>
        <end position="29"/>
    </location>
</feature>
<feature type="transmembrane region" description="Helical; Signal-anchor for type II membrane protein" evidence="2">
    <location>
        <begin position="30"/>
        <end position="50"/>
    </location>
</feature>
<feature type="topological domain" description="Virion surface" evidence="2">
    <location>
        <begin position="51"/>
        <end position="179"/>
    </location>
</feature>
<feature type="glycosylation site" description="N-linked (GlcNAc...) asparagine; by host" evidence="2">
    <location>
        <position position="76"/>
    </location>
</feature>
<feature type="glycosylation site" description="N-linked (GlcNAc...) asparagine; by host" evidence="2">
    <location>
        <position position="121"/>
    </location>
</feature>
<feature type="glycosylation site" description="N-linked (GlcNAc...) asparagine; by host" evidence="2">
    <location>
        <position position="149"/>
    </location>
</feature>
<comment type="function">
    <text evidence="3 4 5">Viroporin that forms a ion channel probably displaying low ion selectivity (PubMed:24672047). Plays a role in counteracting host innate immunity by inhibiting TLR7/MyD88/TRAF6 signaling and STAT1 phosphorylation, leading to down-regulation of type-I IFN (PubMed:27131212, PubMed:29789500).</text>
</comment>
<comment type="subunit">
    <text evidence="1 3">Homooligomer (PubMed:24672047). Interacts with glycoprotein G (By similarity).</text>
</comment>
<comment type="subcellular location">
    <subcellularLocation>
        <location evidence="6">Virion membrane</location>
        <topology evidence="6">Single-pass type II membrane protein</topology>
    </subcellularLocation>
    <subcellularLocation>
        <location evidence="6">Host cell membrane</location>
        <topology evidence="6">Single-pass type II membrane protein</topology>
    </subcellularLocation>
</comment>
<comment type="similarity">
    <text evidence="6">Belongs to the metapneumovirus small hydrophobic protein family.</text>
</comment>
<evidence type="ECO:0000250" key="1">
    <source>
        <dbReference type="UniProtKB" id="P0DOE5"/>
    </source>
</evidence>
<evidence type="ECO:0000255" key="2"/>
<evidence type="ECO:0000269" key="3">
    <source>
    </source>
</evidence>
<evidence type="ECO:0000269" key="4">
    <source>
    </source>
</evidence>
<evidence type="ECO:0000269" key="5">
    <source>
    </source>
</evidence>
<evidence type="ECO:0000305" key="6"/>